<gene>
    <name type="primary">Myt1</name>
    <name type="ORF">CG32417</name>
</gene>
<evidence type="ECO:0000250" key="1"/>
<evidence type="ECO:0000255" key="2">
    <source>
        <dbReference type="PROSITE-ProRule" id="PRU00159"/>
    </source>
</evidence>
<evidence type="ECO:0000255" key="3">
    <source>
        <dbReference type="PROSITE-ProRule" id="PRU10027"/>
    </source>
</evidence>
<evidence type="ECO:0000256" key="4">
    <source>
        <dbReference type="SAM" id="MobiDB-lite"/>
    </source>
</evidence>
<evidence type="ECO:0000269" key="5">
    <source>
    </source>
</evidence>
<evidence type="ECO:0000269" key="6">
    <source>
    </source>
</evidence>
<evidence type="ECO:0000269" key="7">
    <source>
    </source>
</evidence>
<evidence type="ECO:0000269" key="8">
    <source>
    </source>
</evidence>
<evidence type="ECO:0000305" key="9"/>
<evidence type="ECO:0000305" key="10">
    <source>
    </source>
</evidence>
<sequence>MEKHHRLPLPELHDDKHRHKQCNGENSNRFRPPKYKTRGYVAVDNNNLNRSQSLGSCSTNSSQIAHAISFRDAGCSDSSTLPSSPVQAELSTLSLSHFEQCFERLAKLGEGSFGEVFQVRDRSDGQLYAVKISKQLFRGEQYRAERLEEVRRYEEFSGHENCIRFIRAWEQYDRLYMQMELCRESLEQYLLRCQRIPEERIWHILLDLLRGLKSLHDRNLIHLDIKLDNVLIGEDDETCKLADFGLVIDVDRANSHHATEGDSRYMAPEILQGHFSKAADIFSLGIAMLELACYMDLPSNGPLWHELRHGILPEEFINKISLELQSVIKSMMKPDPAQRPTAEQLLSHPKLQYLQKKRKSLMNFSMLSRSFRRSRRAVWGRMCNWKTAAFRYLLYFLEVLHLCKPITASQPNINIVPSSPSSKGVPLVPQVEFQLVGSTPIANRDCYASDFLSGEDPLDLSNQGSPNVINSTPLNTNQGKSRLDLLKNNVDSMGRYVHVHDFESPCSALSSAKVLDTSSFRRKKLFVLEYDDE</sequence>
<keyword id="KW-0067">ATP-binding</keyword>
<keyword id="KW-0131">Cell cycle</keyword>
<keyword id="KW-0333">Golgi apparatus</keyword>
<keyword id="KW-0418">Kinase</keyword>
<keyword id="KW-0460">Magnesium</keyword>
<keyword id="KW-0472">Membrane</keyword>
<keyword id="KW-0479">Metal-binding</keyword>
<keyword id="KW-0547">Nucleotide-binding</keyword>
<keyword id="KW-0597">Phosphoprotein</keyword>
<keyword id="KW-1185">Reference proteome</keyword>
<keyword id="KW-0723">Serine/threonine-protein kinase</keyword>
<keyword id="KW-0808">Transferase</keyword>
<protein>
    <recommendedName>
        <fullName>Membrane-associated tyrosine- and threonine-specific cdc2-inhibitory kinase</fullName>
        <ecNumber>2.7.11.1</ecNumber>
    </recommendedName>
    <alternativeName>
        <fullName>Myt1 kinase</fullName>
    </alternativeName>
    <alternativeName>
        <fullName>dMyt1</fullName>
    </alternativeName>
</protein>
<comment type="function">
    <text evidence="5 6 7">Acts as a negative regulator of entry into mitosis (G2 to M transition) by phosphorylation of Cdk1 specifically when Cdk1 is complexed to cyclins (PubMed:11882391, PubMed:12072468, PubMed:15581871). Mediates phosphorylation of Cdk1 predominantly on 'Thr-14' (PubMed:11882391). Also involved in Golgi fragmentation (PubMed:11882391). May be involved in phosphorylation of Cdk1 on 'Tyr-15' to a lesser degree, however tyrosine kinase activity is unclear and may be indirect (PubMed:11882391). May be a downstream target of Notch signaling pathway during eye development (PubMed:12072468).</text>
</comment>
<comment type="catalytic activity">
    <reaction>
        <text>L-seryl-[protein] + ATP = O-phospho-L-seryl-[protein] + ADP + H(+)</text>
        <dbReference type="Rhea" id="RHEA:17989"/>
        <dbReference type="Rhea" id="RHEA-COMP:9863"/>
        <dbReference type="Rhea" id="RHEA-COMP:11604"/>
        <dbReference type="ChEBI" id="CHEBI:15378"/>
        <dbReference type="ChEBI" id="CHEBI:29999"/>
        <dbReference type="ChEBI" id="CHEBI:30616"/>
        <dbReference type="ChEBI" id="CHEBI:83421"/>
        <dbReference type="ChEBI" id="CHEBI:456216"/>
        <dbReference type="EC" id="2.7.11.1"/>
    </reaction>
</comment>
<comment type="catalytic activity">
    <reaction>
        <text>L-threonyl-[protein] + ATP = O-phospho-L-threonyl-[protein] + ADP + H(+)</text>
        <dbReference type="Rhea" id="RHEA:46608"/>
        <dbReference type="Rhea" id="RHEA-COMP:11060"/>
        <dbReference type="Rhea" id="RHEA-COMP:11605"/>
        <dbReference type="ChEBI" id="CHEBI:15378"/>
        <dbReference type="ChEBI" id="CHEBI:30013"/>
        <dbReference type="ChEBI" id="CHEBI:30616"/>
        <dbReference type="ChEBI" id="CHEBI:61977"/>
        <dbReference type="ChEBI" id="CHEBI:456216"/>
        <dbReference type="EC" id="2.7.11.1"/>
    </reaction>
</comment>
<comment type="subcellular location">
    <subcellularLocation>
        <location evidence="10">Golgi apparatus membrane</location>
        <topology evidence="10">Peripheral membrane protein</topology>
    </subcellularLocation>
</comment>
<comment type="similarity">
    <text evidence="2">Belongs to the protein kinase superfamily. Ser/Thr protein kinase family. WEE1 subfamily.</text>
</comment>
<comment type="sequence caution" evidence="9">
    <conflict type="frameshift">
        <sequence resource="EMBL-CDS" id="AAF32288"/>
    </conflict>
</comment>
<comment type="sequence caution" evidence="9">
    <conflict type="erroneous initiation">
        <sequence resource="EMBL-CDS" id="AAK77309"/>
    </conflict>
    <text>Truncated N-terminus.</text>
</comment>
<proteinExistence type="evidence at protein level"/>
<name>PMYT1_DROME</name>
<reference key="1">
    <citation type="journal article" date="2002" name="Cell. Signal.">
        <title>Identification of Drosophila Myt1 kinase and its role in Golgi during mitosis.</title>
        <authorList>
            <person name="Cornwell W.D."/>
            <person name="Kaminski P.J."/>
            <person name="Jackson J.R."/>
        </authorList>
    </citation>
    <scope>NUCLEOTIDE SEQUENCE [MRNA]</scope>
    <scope>FUNCTION</scope>
    <scope>SUBCELLULAR LOCATION</scope>
</reference>
<reference key="2">
    <citation type="journal article" date="2002" name="Genetics">
        <title>Ectopic expression of the Drosophila Cdk1 inhibitory kinases, Wee1 and Myt1, interferes with the second mitotic wave and disrupts pattern formation during eye development.</title>
        <authorList>
            <person name="Price D.M."/>
            <person name="Jin Z."/>
            <person name="Rabinovitch S."/>
            <person name="Campbell S.D."/>
        </authorList>
    </citation>
    <scope>NUCLEOTIDE SEQUENCE [GENOMIC DNA / MRNA]</scope>
    <scope>FUNCTION</scope>
</reference>
<reference key="3">
    <citation type="journal article" date="2000" name="Science">
        <title>The genome sequence of Drosophila melanogaster.</title>
        <authorList>
            <person name="Adams M.D."/>
            <person name="Celniker S.E."/>
            <person name="Holt R.A."/>
            <person name="Evans C.A."/>
            <person name="Gocayne J.D."/>
            <person name="Amanatides P.G."/>
            <person name="Scherer S.E."/>
            <person name="Li P.W."/>
            <person name="Hoskins R.A."/>
            <person name="Galle R.F."/>
            <person name="George R.A."/>
            <person name="Lewis S.E."/>
            <person name="Richards S."/>
            <person name="Ashburner M."/>
            <person name="Henderson S.N."/>
            <person name="Sutton G.G."/>
            <person name="Wortman J.R."/>
            <person name="Yandell M.D."/>
            <person name="Zhang Q."/>
            <person name="Chen L.X."/>
            <person name="Brandon R.C."/>
            <person name="Rogers Y.-H.C."/>
            <person name="Blazej R.G."/>
            <person name="Champe M."/>
            <person name="Pfeiffer B.D."/>
            <person name="Wan K.H."/>
            <person name="Doyle C."/>
            <person name="Baxter E.G."/>
            <person name="Helt G."/>
            <person name="Nelson C.R."/>
            <person name="Miklos G.L.G."/>
            <person name="Abril J.F."/>
            <person name="Agbayani A."/>
            <person name="An H.-J."/>
            <person name="Andrews-Pfannkoch C."/>
            <person name="Baldwin D."/>
            <person name="Ballew R.M."/>
            <person name="Basu A."/>
            <person name="Baxendale J."/>
            <person name="Bayraktaroglu L."/>
            <person name="Beasley E.M."/>
            <person name="Beeson K.Y."/>
            <person name="Benos P.V."/>
            <person name="Berman B.P."/>
            <person name="Bhandari D."/>
            <person name="Bolshakov S."/>
            <person name="Borkova D."/>
            <person name="Botchan M.R."/>
            <person name="Bouck J."/>
            <person name="Brokstein P."/>
            <person name="Brottier P."/>
            <person name="Burtis K.C."/>
            <person name="Busam D.A."/>
            <person name="Butler H."/>
            <person name="Cadieu E."/>
            <person name="Center A."/>
            <person name="Chandra I."/>
            <person name="Cherry J.M."/>
            <person name="Cawley S."/>
            <person name="Dahlke C."/>
            <person name="Davenport L.B."/>
            <person name="Davies P."/>
            <person name="de Pablos B."/>
            <person name="Delcher A."/>
            <person name="Deng Z."/>
            <person name="Mays A.D."/>
            <person name="Dew I."/>
            <person name="Dietz S.M."/>
            <person name="Dodson K."/>
            <person name="Doup L.E."/>
            <person name="Downes M."/>
            <person name="Dugan-Rocha S."/>
            <person name="Dunkov B.C."/>
            <person name="Dunn P."/>
            <person name="Durbin K.J."/>
            <person name="Evangelista C.C."/>
            <person name="Ferraz C."/>
            <person name="Ferriera S."/>
            <person name="Fleischmann W."/>
            <person name="Fosler C."/>
            <person name="Gabrielian A.E."/>
            <person name="Garg N.S."/>
            <person name="Gelbart W.M."/>
            <person name="Glasser K."/>
            <person name="Glodek A."/>
            <person name="Gong F."/>
            <person name="Gorrell J.H."/>
            <person name="Gu Z."/>
            <person name="Guan P."/>
            <person name="Harris M."/>
            <person name="Harris N.L."/>
            <person name="Harvey D.A."/>
            <person name="Heiman T.J."/>
            <person name="Hernandez J.R."/>
            <person name="Houck J."/>
            <person name="Hostin D."/>
            <person name="Houston K.A."/>
            <person name="Howland T.J."/>
            <person name="Wei M.-H."/>
            <person name="Ibegwam C."/>
            <person name="Jalali M."/>
            <person name="Kalush F."/>
            <person name="Karpen G.H."/>
            <person name="Ke Z."/>
            <person name="Kennison J.A."/>
            <person name="Ketchum K.A."/>
            <person name="Kimmel B.E."/>
            <person name="Kodira C.D."/>
            <person name="Kraft C.L."/>
            <person name="Kravitz S."/>
            <person name="Kulp D."/>
            <person name="Lai Z."/>
            <person name="Lasko P."/>
            <person name="Lei Y."/>
            <person name="Levitsky A.A."/>
            <person name="Li J.H."/>
            <person name="Li Z."/>
            <person name="Liang Y."/>
            <person name="Lin X."/>
            <person name="Liu X."/>
            <person name="Mattei B."/>
            <person name="McIntosh T.C."/>
            <person name="McLeod M.P."/>
            <person name="McPherson D."/>
            <person name="Merkulov G."/>
            <person name="Milshina N.V."/>
            <person name="Mobarry C."/>
            <person name="Morris J."/>
            <person name="Moshrefi A."/>
            <person name="Mount S.M."/>
            <person name="Moy M."/>
            <person name="Murphy B."/>
            <person name="Murphy L."/>
            <person name="Muzny D.M."/>
            <person name="Nelson D.L."/>
            <person name="Nelson D.R."/>
            <person name="Nelson K.A."/>
            <person name="Nixon K."/>
            <person name="Nusskern D.R."/>
            <person name="Pacleb J.M."/>
            <person name="Palazzolo M."/>
            <person name="Pittman G.S."/>
            <person name="Pan S."/>
            <person name="Pollard J."/>
            <person name="Puri V."/>
            <person name="Reese M.G."/>
            <person name="Reinert K."/>
            <person name="Remington K."/>
            <person name="Saunders R.D.C."/>
            <person name="Scheeler F."/>
            <person name="Shen H."/>
            <person name="Shue B.C."/>
            <person name="Siden-Kiamos I."/>
            <person name="Simpson M."/>
            <person name="Skupski M.P."/>
            <person name="Smith T.J."/>
            <person name="Spier E."/>
            <person name="Spradling A.C."/>
            <person name="Stapleton M."/>
            <person name="Strong R."/>
            <person name="Sun E."/>
            <person name="Svirskas R."/>
            <person name="Tector C."/>
            <person name="Turner R."/>
            <person name="Venter E."/>
            <person name="Wang A.H."/>
            <person name="Wang X."/>
            <person name="Wang Z.-Y."/>
            <person name="Wassarman D.A."/>
            <person name="Weinstock G.M."/>
            <person name="Weissenbach J."/>
            <person name="Williams S.M."/>
            <person name="Woodage T."/>
            <person name="Worley K.C."/>
            <person name="Wu D."/>
            <person name="Yang S."/>
            <person name="Yao Q.A."/>
            <person name="Ye J."/>
            <person name="Yeh R.-F."/>
            <person name="Zaveri J.S."/>
            <person name="Zhan M."/>
            <person name="Zhang G."/>
            <person name="Zhao Q."/>
            <person name="Zheng L."/>
            <person name="Zheng X.H."/>
            <person name="Zhong F.N."/>
            <person name="Zhong W."/>
            <person name="Zhou X."/>
            <person name="Zhu S.C."/>
            <person name="Zhu X."/>
            <person name="Smith H.O."/>
            <person name="Gibbs R.A."/>
            <person name="Myers E.W."/>
            <person name="Rubin G.M."/>
            <person name="Venter J.C."/>
        </authorList>
    </citation>
    <scope>NUCLEOTIDE SEQUENCE [LARGE SCALE GENOMIC DNA]</scope>
    <source>
        <strain>Berkeley</strain>
    </source>
</reference>
<reference key="4">
    <citation type="journal article" date="2002" name="Genome Biol.">
        <title>Annotation of the Drosophila melanogaster euchromatic genome: a systematic review.</title>
        <authorList>
            <person name="Misra S."/>
            <person name="Crosby M.A."/>
            <person name="Mungall C.J."/>
            <person name="Matthews B.B."/>
            <person name="Campbell K.S."/>
            <person name="Hradecky P."/>
            <person name="Huang Y."/>
            <person name="Kaminker J.S."/>
            <person name="Millburn G.H."/>
            <person name="Prochnik S.E."/>
            <person name="Smith C.D."/>
            <person name="Tupy J.L."/>
            <person name="Whitfield E.J."/>
            <person name="Bayraktaroglu L."/>
            <person name="Berman B.P."/>
            <person name="Bettencourt B.R."/>
            <person name="Celniker S.E."/>
            <person name="de Grey A.D.N.J."/>
            <person name="Drysdale R.A."/>
            <person name="Harris N.L."/>
            <person name="Richter J."/>
            <person name="Russo S."/>
            <person name="Schroeder A.J."/>
            <person name="Shu S.Q."/>
            <person name="Stapleton M."/>
            <person name="Yamada C."/>
            <person name="Ashburner M."/>
            <person name="Gelbart W.M."/>
            <person name="Rubin G.M."/>
            <person name="Lewis S.E."/>
        </authorList>
    </citation>
    <scope>GENOME REANNOTATION</scope>
    <source>
        <strain>Berkeley</strain>
    </source>
</reference>
<reference key="5">
    <citation type="journal article" date="2002" name="Genome Biol.">
        <title>A Drosophila full-length cDNA resource.</title>
        <authorList>
            <person name="Stapleton M."/>
            <person name="Carlson J.W."/>
            <person name="Brokstein P."/>
            <person name="Yu C."/>
            <person name="Champe M."/>
            <person name="George R.A."/>
            <person name="Guarin H."/>
            <person name="Kronmiller B."/>
            <person name="Pacleb J.M."/>
            <person name="Park S."/>
            <person name="Wan K.H."/>
            <person name="Rubin G.M."/>
            <person name="Celniker S.E."/>
        </authorList>
    </citation>
    <scope>NUCLEOTIDE SEQUENCE [LARGE SCALE MRNA] OF 3-533</scope>
    <source>
        <strain>Berkeley</strain>
        <tissue>Head</tissue>
    </source>
</reference>
<reference key="6">
    <citation type="journal article" date="2004" name="Dev. Biol.">
        <title>Mother-daughter precursor cell fate transformation after Cdc2 down-regulation in the Drosophila bristle lineage.</title>
        <authorList>
            <person name="Fichelson P."/>
            <person name="Gho M."/>
        </authorList>
    </citation>
    <scope>FUNCTION</scope>
</reference>
<reference key="7">
    <citation type="journal article" date="2008" name="J. Proteome Res.">
        <title>Phosphoproteome analysis of Drosophila melanogaster embryos.</title>
        <authorList>
            <person name="Zhai B."/>
            <person name="Villen J."/>
            <person name="Beausoleil S.A."/>
            <person name="Mintseris J."/>
            <person name="Gygi S.P."/>
        </authorList>
    </citation>
    <scope>PHOSPHORYLATION [LARGE SCALE ANALYSIS] AT SER-504 AND SER-519</scope>
    <scope>IDENTIFICATION BY MASS SPECTROMETRY</scope>
    <source>
        <tissue>Embryo</tissue>
    </source>
</reference>
<dbReference type="EC" id="2.7.11.1"/>
<dbReference type="EMBL" id="AF215861">
    <property type="protein sequence ID" value="AAF32288.1"/>
    <property type="status" value="ALT_FRAME"/>
    <property type="molecule type" value="mRNA"/>
</dbReference>
<dbReference type="EMBL" id="AE014296">
    <property type="protein sequence ID" value="AAF50747.3"/>
    <property type="molecule type" value="Genomic_DNA"/>
</dbReference>
<dbReference type="EMBL" id="AY047577">
    <property type="protein sequence ID" value="AAK77309.1"/>
    <property type="status" value="ALT_INIT"/>
    <property type="molecule type" value="mRNA"/>
</dbReference>
<dbReference type="RefSeq" id="NP_647987.2">
    <property type="nucleotide sequence ID" value="NM_139730.3"/>
</dbReference>
<dbReference type="SMR" id="Q9NI63"/>
<dbReference type="BioGRID" id="64110">
    <property type="interactions" value="11"/>
</dbReference>
<dbReference type="FunCoup" id="Q9NI63">
    <property type="interactions" value="341"/>
</dbReference>
<dbReference type="STRING" id="7227.FBpp0076824"/>
<dbReference type="iPTMnet" id="Q9NI63"/>
<dbReference type="PaxDb" id="7227-FBpp0076824"/>
<dbReference type="EnsemblMetazoa" id="FBtr0077118">
    <property type="protein sequence ID" value="FBpp0076824"/>
    <property type="gene ID" value="FBgn0040298"/>
</dbReference>
<dbReference type="GeneID" id="38649"/>
<dbReference type="KEGG" id="dme:Dmel_CG32417"/>
<dbReference type="AGR" id="FB:FBgn0040298"/>
<dbReference type="CTD" id="4661"/>
<dbReference type="FlyBase" id="FBgn0040298">
    <property type="gene designation" value="Myt1"/>
</dbReference>
<dbReference type="VEuPathDB" id="VectorBase:FBgn0040298"/>
<dbReference type="eggNOG" id="KOG0601">
    <property type="taxonomic scope" value="Eukaryota"/>
</dbReference>
<dbReference type="GeneTree" id="ENSGT00940000159427"/>
<dbReference type="HOGENOM" id="CLU_028362_0_0_1"/>
<dbReference type="InParanoid" id="Q9NI63"/>
<dbReference type="OMA" id="HFEQCFE"/>
<dbReference type="OrthoDB" id="5337378at2759"/>
<dbReference type="PhylomeDB" id="Q9NI63"/>
<dbReference type="Reactome" id="R-DME-156711">
    <property type="pathway name" value="Polo-like kinase mediated events"/>
</dbReference>
<dbReference type="Reactome" id="R-DME-69273">
    <property type="pathway name" value="Cyclin A/B1/B2 associated events during G2/M transition"/>
</dbReference>
<dbReference type="Reactome" id="R-DME-69478">
    <property type="pathway name" value="G2/M DNA replication checkpoint"/>
</dbReference>
<dbReference type="BioGRID-ORCS" id="38649">
    <property type="hits" value="0 hits in 3 CRISPR screens"/>
</dbReference>
<dbReference type="GenomeRNAi" id="38649"/>
<dbReference type="PRO" id="PR:Q9NI63"/>
<dbReference type="Proteomes" id="UP000000803">
    <property type="component" value="Chromosome 3L"/>
</dbReference>
<dbReference type="Bgee" id="FBgn0040298">
    <property type="expression patterns" value="Expressed in oocyte and 39 other cell types or tissues"/>
</dbReference>
<dbReference type="GO" id="GO:0005737">
    <property type="term" value="C:cytoplasm"/>
    <property type="evidence" value="ECO:0000318"/>
    <property type="project" value="GO_Central"/>
</dbReference>
<dbReference type="GO" id="GO:0005794">
    <property type="term" value="C:Golgi apparatus"/>
    <property type="evidence" value="ECO:0000314"/>
    <property type="project" value="UniProtKB"/>
</dbReference>
<dbReference type="GO" id="GO:0000139">
    <property type="term" value="C:Golgi membrane"/>
    <property type="evidence" value="ECO:0007669"/>
    <property type="project" value="UniProtKB-SubCell"/>
</dbReference>
<dbReference type="GO" id="GO:0005634">
    <property type="term" value="C:nucleus"/>
    <property type="evidence" value="ECO:0000318"/>
    <property type="project" value="GO_Central"/>
</dbReference>
<dbReference type="GO" id="GO:0005524">
    <property type="term" value="F:ATP binding"/>
    <property type="evidence" value="ECO:0007669"/>
    <property type="project" value="UniProtKB-KW"/>
</dbReference>
<dbReference type="GO" id="GO:0046872">
    <property type="term" value="F:metal ion binding"/>
    <property type="evidence" value="ECO:0007669"/>
    <property type="project" value="UniProtKB-KW"/>
</dbReference>
<dbReference type="GO" id="GO:0004672">
    <property type="term" value="F:protein kinase activity"/>
    <property type="evidence" value="ECO:0000318"/>
    <property type="project" value="GO_Central"/>
</dbReference>
<dbReference type="GO" id="GO:0106310">
    <property type="term" value="F:protein serine kinase activity"/>
    <property type="evidence" value="ECO:0007669"/>
    <property type="project" value="RHEA"/>
</dbReference>
<dbReference type="GO" id="GO:0004674">
    <property type="term" value="F:protein serine/threonine kinase activity"/>
    <property type="evidence" value="ECO:0007669"/>
    <property type="project" value="UniProtKB-KW"/>
</dbReference>
<dbReference type="GO" id="GO:0004712">
    <property type="term" value="F:protein serine/threonine/tyrosine kinase activity"/>
    <property type="evidence" value="ECO:0000314"/>
    <property type="project" value="UniProtKB"/>
</dbReference>
<dbReference type="GO" id="GO:0007143">
    <property type="term" value="P:female meiotic nuclear division"/>
    <property type="evidence" value="ECO:0000315"/>
    <property type="project" value="FlyBase"/>
</dbReference>
<dbReference type="GO" id="GO:0000086">
    <property type="term" value="P:G2/M transition of mitotic cell cycle"/>
    <property type="evidence" value="ECO:0000315"/>
    <property type="project" value="UniProtKB"/>
</dbReference>
<dbReference type="GO" id="GO:0048142">
    <property type="term" value="P:germarium-derived cystoblast division"/>
    <property type="evidence" value="ECO:0000315"/>
    <property type="project" value="FlyBase"/>
</dbReference>
<dbReference type="GO" id="GO:0007140">
    <property type="term" value="P:male meiotic nuclear division"/>
    <property type="evidence" value="ECO:0000315"/>
    <property type="project" value="FlyBase"/>
</dbReference>
<dbReference type="GO" id="GO:0051321">
    <property type="term" value="P:meiotic cell cycle"/>
    <property type="evidence" value="ECO:0000315"/>
    <property type="project" value="FlyBase"/>
</dbReference>
<dbReference type="GO" id="GO:0010972">
    <property type="term" value="P:negative regulation of G2/M transition of mitotic cell cycle"/>
    <property type="evidence" value="ECO:0000318"/>
    <property type="project" value="GO_Central"/>
</dbReference>
<dbReference type="GO" id="GO:0110031">
    <property type="term" value="P:negative regulation of G2/MI transition of meiotic cell cycle"/>
    <property type="evidence" value="ECO:0000318"/>
    <property type="project" value="GO_Central"/>
</dbReference>
<dbReference type="GO" id="GO:0045930">
    <property type="term" value="P:negative regulation of mitotic cell cycle"/>
    <property type="evidence" value="ECO:0000315"/>
    <property type="project" value="UniProtKB"/>
</dbReference>
<dbReference type="GO" id="GO:0045793">
    <property type="term" value="P:positive regulation of cell size"/>
    <property type="evidence" value="ECO:0000316"/>
    <property type="project" value="FlyBase"/>
</dbReference>
<dbReference type="GO" id="GO:0006468">
    <property type="term" value="P:protein phosphorylation"/>
    <property type="evidence" value="ECO:0000314"/>
    <property type="project" value="UniProtKB"/>
</dbReference>
<dbReference type="GO" id="GO:0048137">
    <property type="term" value="P:spermatocyte division"/>
    <property type="evidence" value="ECO:0000315"/>
    <property type="project" value="FlyBase"/>
</dbReference>
<dbReference type="GO" id="GO:0007284">
    <property type="term" value="P:spermatogonial cell division"/>
    <property type="evidence" value="ECO:0000315"/>
    <property type="project" value="FlyBase"/>
</dbReference>
<dbReference type="CDD" id="cd14050">
    <property type="entry name" value="PKc_Myt1"/>
    <property type="match status" value="1"/>
</dbReference>
<dbReference type="FunFam" id="1.10.510.10:FF:000315">
    <property type="entry name" value="membrane-associated tyrosine- and threonine-specific cdc2-inhibitory kinase"/>
    <property type="match status" value="1"/>
</dbReference>
<dbReference type="FunFam" id="3.30.200.20:FF:000280">
    <property type="entry name" value="membrane-associated tyrosine- and threonine-specific cdc2-inhibitory kinase"/>
    <property type="match status" value="1"/>
</dbReference>
<dbReference type="Gene3D" id="3.30.200.20">
    <property type="entry name" value="Phosphorylase Kinase, domain 1"/>
    <property type="match status" value="1"/>
</dbReference>
<dbReference type="Gene3D" id="1.10.510.10">
    <property type="entry name" value="Transferase(Phosphotransferase) domain 1"/>
    <property type="match status" value="1"/>
</dbReference>
<dbReference type="InterPro" id="IPR050339">
    <property type="entry name" value="CC_SR_Kinase"/>
</dbReference>
<dbReference type="InterPro" id="IPR011009">
    <property type="entry name" value="Kinase-like_dom_sf"/>
</dbReference>
<dbReference type="InterPro" id="IPR000719">
    <property type="entry name" value="Prot_kinase_dom"/>
</dbReference>
<dbReference type="InterPro" id="IPR017441">
    <property type="entry name" value="Protein_kinase_ATP_BS"/>
</dbReference>
<dbReference type="InterPro" id="IPR008271">
    <property type="entry name" value="Ser/Thr_kinase_AS"/>
</dbReference>
<dbReference type="InterPro" id="IPR016235">
    <property type="entry name" value="Tyr/Thr_kinase_Cdc2_inhib"/>
</dbReference>
<dbReference type="PANTHER" id="PTHR11042">
    <property type="entry name" value="EUKARYOTIC TRANSLATION INITIATION FACTOR 2-ALPHA KINASE EIF2-ALPHA KINASE -RELATED"/>
    <property type="match status" value="1"/>
</dbReference>
<dbReference type="PANTHER" id="PTHR11042:SF183">
    <property type="entry name" value="MEMBRANE-ASSOCIATED TYROSINE- AND THREONINE-SPECIFIC CDC2-INHIBITORY KINASE"/>
    <property type="match status" value="1"/>
</dbReference>
<dbReference type="Pfam" id="PF00069">
    <property type="entry name" value="Pkinase"/>
    <property type="match status" value="1"/>
</dbReference>
<dbReference type="PIRSF" id="PIRSF000567">
    <property type="entry name" value="TYPK_Myt1"/>
    <property type="match status" value="1"/>
</dbReference>
<dbReference type="SMART" id="SM00220">
    <property type="entry name" value="S_TKc"/>
    <property type="match status" value="1"/>
</dbReference>
<dbReference type="SUPFAM" id="SSF56112">
    <property type="entry name" value="Protein kinase-like (PK-like)"/>
    <property type="match status" value="1"/>
</dbReference>
<dbReference type="PROSITE" id="PS00107">
    <property type="entry name" value="PROTEIN_KINASE_ATP"/>
    <property type="match status" value="1"/>
</dbReference>
<dbReference type="PROSITE" id="PS50011">
    <property type="entry name" value="PROTEIN_KINASE_DOM"/>
    <property type="match status" value="1"/>
</dbReference>
<dbReference type="PROSITE" id="PS00108">
    <property type="entry name" value="PROTEIN_KINASE_ST"/>
    <property type="match status" value="1"/>
</dbReference>
<organism>
    <name type="scientific">Drosophila melanogaster</name>
    <name type="common">Fruit fly</name>
    <dbReference type="NCBI Taxonomy" id="7227"/>
    <lineage>
        <taxon>Eukaryota</taxon>
        <taxon>Metazoa</taxon>
        <taxon>Ecdysozoa</taxon>
        <taxon>Arthropoda</taxon>
        <taxon>Hexapoda</taxon>
        <taxon>Insecta</taxon>
        <taxon>Pterygota</taxon>
        <taxon>Neoptera</taxon>
        <taxon>Endopterygota</taxon>
        <taxon>Diptera</taxon>
        <taxon>Brachycera</taxon>
        <taxon>Muscomorpha</taxon>
        <taxon>Ephydroidea</taxon>
        <taxon>Drosophilidae</taxon>
        <taxon>Drosophila</taxon>
        <taxon>Sophophora</taxon>
    </lineage>
</organism>
<accession>Q9NI63</accession>
<accession>Q961T4</accession>
<accession>Q9VRP6</accession>
<feature type="chain" id="PRO_0000086577" description="Membrane-associated tyrosine- and threonine-specific cdc2-inhibitory kinase">
    <location>
        <begin position="1"/>
        <end position="533"/>
    </location>
</feature>
<feature type="domain" description="Protein kinase" evidence="2">
    <location>
        <begin position="102"/>
        <end position="351"/>
    </location>
</feature>
<feature type="region of interest" description="Disordered" evidence="4">
    <location>
        <begin position="1"/>
        <end position="35"/>
    </location>
</feature>
<feature type="active site" description="Proton acceptor" evidence="2 3">
    <location>
        <position position="224"/>
    </location>
</feature>
<feature type="binding site" evidence="2">
    <location>
        <begin position="108"/>
        <end position="116"/>
    </location>
    <ligand>
        <name>ATP</name>
        <dbReference type="ChEBI" id="CHEBI:30616"/>
    </ligand>
</feature>
<feature type="binding site" evidence="2">
    <location>
        <position position="131"/>
    </location>
    <ligand>
        <name>ATP</name>
        <dbReference type="ChEBI" id="CHEBI:30616"/>
    </ligand>
</feature>
<feature type="binding site" evidence="1">
    <location>
        <position position="229"/>
    </location>
    <ligand>
        <name>Mg(2+)</name>
        <dbReference type="ChEBI" id="CHEBI:18420"/>
    </ligand>
</feature>
<feature type="binding site" evidence="1">
    <location>
        <position position="243"/>
    </location>
    <ligand>
        <name>Mg(2+)</name>
        <dbReference type="ChEBI" id="CHEBI:18420"/>
    </ligand>
</feature>
<feature type="modified residue" description="Phosphoserine" evidence="8">
    <location>
        <position position="504"/>
    </location>
</feature>
<feature type="modified residue" description="Phosphoserine" evidence="8">
    <location>
        <position position="519"/>
    </location>
</feature>